<reference key="1">
    <citation type="journal article" date="2005" name="Science">
        <title>The transcriptional landscape of the mammalian genome.</title>
        <authorList>
            <person name="Carninci P."/>
            <person name="Kasukawa T."/>
            <person name="Katayama S."/>
            <person name="Gough J."/>
            <person name="Frith M.C."/>
            <person name="Maeda N."/>
            <person name="Oyama R."/>
            <person name="Ravasi T."/>
            <person name="Lenhard B."/>
            <person name="Wells C."/>
            <person name="Kodzius R."/>
            <person name="Shimokawa K."/>
            <person name="Bajic V.B."/>
            <person name="Brenner S.E."/>
            <person name="Batalov S."/>
            <person name="Forrest A.R."/>
            <person name="Zavolan M."/>
            <person name="Davis M.J."/>
            <person name="Wilming L.G."/>
            <person name="Aidinis V."/>
            <person name="Allen J.E."/>
            <person name="Ambesi-Impiombato A."/>
            <person name="Apweiler R."/>
            <person name="Aturaliya R.N."/>
            <person name="Bailey T.L."/>
            <person name="Bansal M."/>
            <person name="Baxter L."/>
            <person name="Beisel K.W."/>
            <person name="Bersano T."/>
            <person name="Bono H."/>
            <person name="Chalk A.M."/>
            <person name="Chiu K.P."/>
            <person name="Choudhary V."/>
            <person name="Christoffels A."/>
            <person name="Clutterbuck D.R."/>
            <person name="Crowe M.L."/>
            <person name="Dalla E."/>
            <person name="Dalrymple B.P."/>
            <person name="de Bono B."/>
            <person name="Della Gatta G."/>
            <person name="di Bernardo D."/>
            <person name="Down T."/>
            <person name="Engstrom P."/>
            <person name="Fagiolini M."/>
            <person name="Faulkner G."/>
            <person name="Fletcher C.F."/>
            <person name="Fukushima T."/>
            <person name="Furuno M."/>
            <person name="Futaki S."/>
            <person name="Gariboldi M."/>
            <person name="Georgii-Hemming P."/>
            <person name="Gingeras T.R."/>
            <person name="Gojobori T."/>
            <person name="Green R.E."/>
            <person name="Gustincich S."/>
            <person name="Harbers M."/>
            <person name="Hayashi Y."/>
            <person name="Hensch T.K."/>
            <person name="Hirokawa N."/>
            <person name="Hill D."/>
            <person name="Huminiecki L."/>
            <person name="Iacono M."/>
            <person name="Ikeo K."/>
            <person name="Iwama A."/>
            <person name="Ishikawa T."/>
            <person name="Jakt M."/>
            <person name="Kanapin A."/>
            <person name="Katoh M."/>
            <person name="Kawasawa Y."/>
            <person name="Kelso J."/>
            <person name="Kitamura H."/>
            <person name="Kitano H."/>
            <person name="Kollias G."/>
            <person name="Krishnan S.P."/>
            <person name="Kruger A."/>
            <person name="Kummerfeld S.K."/>
            <person name="Kurochkin I.V."/>
            <person name="Lareau L.F."/>
            <person name="Lazarevic D."/>
            <person name="Lipovich L."/>
            <person name="Liu J."/>
            <person name="Liuni S."/>
            <person name="McWilliam S."/>
            <person name="Madan Babu M."/>
            <person name="Madera M."/>
            <person name="Marchionni L."/>
            <person name="Matsuda H."/>
            <person name="Matsuzawa S."/>
            <person name="Miki H."/>
            <person name="Mignone F."/>
            <person name="Miyake S."/>
            <person name="Morris K."/>
            <person name="Mottagui-Tabar S."/>
            <person name="Mulder N."/>
            <person name="Nakano N."/>
            <person name="Nakauchi H."/>
            <person name="Ng P."/>
            <person name="Nilsson R."/>
            <person name="Nishiguchi S."/>
            <person name="Nishikawa S."/>
            <person name="Nori F."/>
            <person name="Ohara O."/>
            <person name="Okazaki Y."/>
            <person name="Orlando V."/>
            <person name="Pang K.C."/>
            <person name="Pavan W.J."/>
            <person name="Pavesi G."/>
            <person name="Pesole G."/>
            <person name="Petrovsky N."/>
            <person name="Piazza S."/>
            <person name="Reed J."/>
            <person name="Reid J.F."/>
            <person name="Ring B.Z."/>
            <person name="Ringwald M."/>
            <person name="Rost B."/>
            <person name="Ruan Y."/>
            <person name="Salzberg S.L."/>
            <person name="Sandelin A."/>
            <person name="Schneider C."/>
            <person name="Schoenbach C."/>
            <person name="Sekiguchi K."/>
            <person name="Semple C.A."/>
            <person name="Seno S."/>
            <person name="Sessa L."/>
            <person name="Sheng Y."/>
            <person name="Shibata Y."/>
            <person name="Shimada H."/>
            <person name="Shimada K."/>
            <person name="Silva D."/>
            <person name="Sinclair B."/>
            <person name="Sperling S."/>
            <person name="Stupka E."/>
            <person name="Sugiura K."/>
            <person name="Sultana R."/>
            <person name="Takenaka Y."/>
            <person name="Taki K."/>
            <person name="Tammoja K."/>
            <person name="Tan S.L."/>
            <person name="Tang S."/>
            <person name="Taylor M.S."/>
            <person name="Tegner J."/>
            <person name="Teichmann S.A."/>
            <person name="Ueda H.R."/>
            <person name="van Nimwegen E."/>
            <person name="Verardo R."/>
            <person name="Wei C.L."/>
            <person name="Yagi K."/>
            <person name="Yamanishi H."/>
            <person name="Zabarovsky E."/>
            <person name="Zhu S."/>
            <person name="Zimmer A."/>
            <person name="Hide W."/>
            <person name="Bult C."/>
            <person name="Grimmond S.M."/>
            <person name="Teasdale R.D."/>
            <person name="Liu E.T."/>
            <person name="Brusic V."/>
            <person name="Quackenbush J."/>
            <person name="Wahlestedt C."/>
            <person name="Mattick J.S."/>
            <person name="Hume D.A."/>
            <person name="Kai C."/>
            <person name="Sasaki D."/>
            <person name="Tomaru Y."/>
            <person name="Fukuda S."/>
            <person name="Kanamori-Katayama M."/>
            <person name="Suzuki M."/>
            <person name="Aoki J."/>
            <person name="Arakawa T."/>
            <person name="Iida J."/>
            <person name="Imamura K."/>
            <person name="Itoh M."/>
            <person name="Kato T."/>
            <person name="Kawaji H."/>
            <person name="Kawagashira N."/>
            <person name="Kawashima T."/>
            <person name="Kojima M."/>
            <person name="Kondo S."/>
            <person name="Konno H."/>
            <person name="Nakano K."/>
            <person name="Ninomiya N."/>
            <person name="Nishio T."/>
            <person name="Okada M."/>
            <person name="Plessy C."/>
            <person name="Shibata K."/>
            <person name="Shiraki T."/>
            <person name="Suzuki S."/>
            <person name="Tagami M."/>
            <person name="Waki K."/>
            <person name="Watahiki A."/>
            <person name="Okamura-Oho Y."/>
            <person name="Suzuki H."/>
            <person name="Kawai J."/>
            <person name="Hayashizaki Y."/>
        </authorList>
    </citation>
    <scope>NUCLEOTIDE SEQUENCE [LARGE SCALE MRNA] (ISOFORM 2)</scope>
    <scope>NUCLEOTIDE SEQUENCE [LARGE SCALE MRNA] OF 1-523 (ISOFORM 1)</scope>
    <source>
        <strain>C57BL/6J</strain>
        <tissue>Testis</tissue>
    </source>
</reference>
<reference key="2">
    <citation type="journal article" date="2009" name="PLoS Biol.">
        <title>Lineage-specific biology revealed by a finished genome assembly of the mouse.</title>
        <authorList>
            <person name="Church D.M."/>
            <person name="Goodstadt L."/>
            <person name="Hillier L.W."/>
            <person name="Zody M.C."/>
            <person name="Goldstein S."/>
            <person name="She X."/>
            <person name="Bult C.J."/>
            <person name="Agarwala R."/>
            <person name="Cherry J.L."/>
            <person name="DiCuccio M."/>
            <person name="Hlavina W."/>
            <person name="Kapustin Y."/>
            <person name="Meric P."/>
            <person name="Maglott D."/>
            <person name="Birtle Z."/>
            <person name="Marques A.C."/>
            <person name="Graves T."/>
            <person name="Zhou S."/>
            <person name="Teague B."/>
            <person name="Potamousis K."/>
            <person name="Churas C."/>
            <person name="Place M."/>
            <person name="Herschleb J."/>
            <person name="Runnheim R."/>
            <person name="Forrest D."/>
            <person name="Amos-Landgraf J."/>
            <person name="Schwartz D.C."/>
            <person name="Cheng Z."/>
            <person name="Lindblad-Toh K."/>
            <person name="Eichler E.E."/>
            <person name="Ponting C.P."/>
        </authorList>
    </citation>
    <scope>NUCLEOTIDE SEQUENCE [LARGE SCALE GENOMIC DNA]</scope>
    <source>
        <strain>C57BL/6J</strain>
    </source>
</reference>
<reference key="3">
    <citation type="journal article" date="2004" name="Genome Res.">
        <title>The status, quality, and expansion of the NIH full-length cDNA project: the Mammalian Gene Collection (MGC).</title>
        <authorList>
            <consortium name="The MGC Project Team"/>
        </authorList>
    </citation>
    <scope>NUCLEOTIDE SEQUENCE [LARGE SCALE MRNA] (ISOFORM 2)</scope>
</reference>
<reference key="4">
    <citation type="journal article" date="2015" name="Mol. Cell. Biol.">
        <title>Independent Mechanisms Target SMCHD1 to Trimethylated Histone H3 Lysine 9-Modified Chromatin and the Inactive X Chromosome.</title>
        <authorList>
            <person name="Brideau N.J."/>
            <person name="Coker H."/>
            <person name="Gendrel A.V."/>
            <person name="Siebert C.A."/>
            <person name="Bezstarosti K."/>
            <person name="Demmers J."/>
            <person name="Poot R.A."/>
            <person name="Nesterova T.B."/>
            <person name="Brockdorff N."/>
        </authorList>
    </citation>
    <scope>SUBCELLULAR LOCATION</scope>
    <scope>INTERACTION WITH SMCHD1</scope>
</reference>
<feature type="chain" id="PRO_0000250687" description="Ligand-dependent nuclear receptor-interacting factor 1">
    <location>
        <begin position="1"/>
        <end position="755"/>
    </location>
</feature>
<feature type="region of interest" description="Disordered" evidence="3">
    <location>
        <begin position="665"/>
        <end position="698"/>
    </location>
</feature>
<feature type="coiled-coil region" evidence="2">
    <location>
        <begin position="678"/>
        <end position="711"/>
    </location>
</feature>
<feature type="short sequence motif" description="PxVxL motif" evidence="1">
    <location>
        <begin position="565"/>
        <end position="569"/>
    </location>
</feature>
<feature type="short sequence motif" description="Nuclear localization signal" evidence="1">
    <location>
        <begin position="612"/>
        <end position="615"/>
    </location>
</feature>
<feature type="short sequence motif" description="Nuclear localization signal" evidence="1">
    <location>
        <begin position="625"/>
        <end position="628"/>
    </location>
</feature>
<feature type="compositionally biased region" description="Basic and acidic residues" evidence="3">
    <location>
        <begin position="671"/>
        <end position="690"/>
    </location>
</feature>
<feature type="modified residue" description="Phosphoserine" evidence="1">
    <location>
        <position position="391"/>
    </location>
</feature>
<feature type="modified residue" description="Phosphoserine" evidence="1">
    <location>
        <position position="419"/>
    </location>
</feature>
<feature type="modified residue" description="Phosphoserine" evidence="1">
    <location>
        <position position="425"/>
    </location>
</feature>
<feature type="modified residue" description="Phosphoserine" evidence="1">
    <location>
        <position position="584"/>
    </location>
</feature>
<feature type="modified residue" description="Phosphothreonine" evidence="1">
    <location>
        <position position="717"/>
    </location>
</feature>
<feature type="cross-link" description="Glycyl lysine isopeptide (Lys-Gly) (interchain with G-Cter in SUMO2)" evidence="1">
    <location>
        <position position="270"/>
    </location>
</feature>
<feature type="cross-link" description="Glycyl lysine isopeptide (Lys-Gly) (interchain with G-Cter in SUMO2)" evidence="1">
    <location>
        <position position="436"/>
    </location>
</feature>
<feature type="cross-link" description="Glycyl lysine isopeptide (Lys-Gly) (interchain with G-Cter in SUMO2)" evidence="1">
    <location>
        <position position="590"/>
    </location>
</feature>
<feature type="cross-link" description="Glycyl lysine isopeptide (Lys-Gly) (interchain with G-Cter in SUMO2)" evidence="1">
    <location>
        <position position="687"/>
    </location>
</feature>
<feature type="splice variant" id="VSP_020722" description="In isoform 2." evidence="5 6">
    <original>TQYEMASIVKKEIQEKGNNKKYSQGS</original>
    <variation>LAKSIRQSQSQNKVQKIWTVIGLQR</variation>
    <location>
        <begin position="515"/>
        <end position="540"/>
    </location>
</feature>
<feature type="splice variant" id="VSP_020723" description="In isoform 2." evidence="5 6">
    <location>
        <begin position="541"/>
        <end position="755"/>
    </location>
</feature>
<feature type="sequence conflict" description="In Ref. 1; BAC26838." evidence="7" ref="1">
    <original>V</original>
    <variation>M</variation>
    <location>
        <position position="236"/>
    </location>
</feature>
<sequence>MSNSLQSVILKTAEEKSGSRCISGCMYQVVPTIGSDGKKLLQLLPISKSSGNLIPVVQSPVMSHGLKANTEKPVQVTFQTQISSSSTSASVQLPVFQPANTTKCFFTGAIDTTGKDRVTSVRTGNFTPPVSNIQNHGVKIHKLTRQTFTIPPSTQNDSSHFIFNTPSLLPNVNSSILPSGNHLKIPAHAEVKSVLASSLPPLVQQKILGTATTSTSGTVEASQIPTVVYVHPVNSVKFVVTKKTQTIYPKPVTFNTLQIPPNVATETQLKGGQHPQAAPVNSIFQEYLQPGIPCIIPVKSSNNVATKVLNTFVGRKNLGDNTIDTPLLNTNSSGRTHSVSEPIKDNALIMFNGKVWLNEKGTCGLPSKIDQQNSVSSDIPLKDSSQLVSSSIVTEISREILNSVLVKSKSFQLKTKSLSNSQLASMANLRAEKNEKVERPSFSVTNPHTMNQSTHCLKQSKTVFINPVFPDGFRTGQNAPRKGNLVQNIEKICSSVDAATVTSQQCVFRDQESQTQYEMASIVKKEIQEKGNNKKYSQGSHTNIKASCLKNDAEFKKLFGLTKDLRVCLTRIPDHLSSGKSFNSFNSLMKSSSYKDANIVVKKEEKKQSFSKKRKAETMKMGNTKKIKIENADDTVMSIMNGTDVASSQPLSSILPTSDISQHNIVTSHSTTREDKRTEAEHCSHEKQEKGTLSSSTSFEQSTFLNKNFMEDIFPVTPPELEETIRDEKIRRLKQILREKEAALEELRKKMYQKQ</sequence>
<dbReference type="EMBL" id="AK030201">
    <property type="protein sequence ID" value="BAC26838.1"/>
    <property type="molecule type" value="mRNA"/>
</dbReference>
<dbReference type="EMBL" id="AK048030">
    <property type="protein sequence ID" value="BAC33218.2"/>
    <property type="molecule type" value="mRNA"/>
</dbReference>
<dbReference type="EMBL" id="AC117255">
    <property type="status" value="NOT_ANNOTATED_CDS"/>
    <property type="molecule type" value="Genomic_DNA"/>
</dbReference>
<dbReference type="EMBL" id="BC117764">
    <property type="protein sequence ID" value="AAI17765.1"/>
    <property type="molecule type" value="mRNA"/>
</dbReference>
<dbReference type="CCDS" id="CCDS17726.1">
    <molecule id="Q8CDD9-1"/>
</dbReference>
<dbReference type="RefSeq" id="NP_001034577.1">
    <molecule id="Q8CDD9-1"/>
    <property type="nucleotide sequence ID" value="NM_001039488.1"/>
</dbReference>
<dbReference type="RefSeq" id="NP_001273614.1">
    <property type="nucleotide sequence ID" value="NM_001286685.1"/>
</dbReference>
<dbReference type="RefSeq" id="NP_082357.2">
    <property type="nucleotide sequence ID" value="NM_028081.2"/>
</dbReference>
<dbReference type="RefSeq" id="XP_006501646.1">
    <property type="nucleotide sequence ID" value="XM_006501583.3"/>
</dbReference>
<dbReference type="RefSeq" id="XP_036019027.1">
    <molecule id="Q8CDD9-1"/>
    <property type="nucleotide sequence ID" value="XM_036163134.1"/>
</dbReference>
<dbReference type="SMR" id="Q8CDD9"/>
<dbReference type="BioGRID" id="236453">
    <property type="interactions" value="7"/>
</dbReference>
<dbReference type="FunCoup" id="Q8CDD9">
    <property type="interactions" value="1354"/>
</dbReference>
<dbReference type="STRING" id="10090.ENSMUSP00000096346"/>
<dbReference type="GlyGen" id="Q8CDD9">
    <property type="glycosylation" value="2 sites, 1 O-linked glycan (1 site)"/>
</dbReference>
<dbReference type="iPTMnet" id="Q8CDD9"/>
<dbReference type="PhosphoSitePlus" id="Q8CDD9"/>
<dbReference type="PaxDb" id="10090-ENSMUSP00000096347"/>
<dbReference type="ProteomicsDB" id="292032">
    <molecule id="Q8CDD9-1"/>
</dbReference>
<dbReference type="ProteomicsDB" id="292033">
    <molecule id="Q8CDD9-2"/>
</dbReference>
<dbReference type="Pumba" id="Q8CDD9"/>
<dbReference type="Antibodypedia" id="33789">
    <property type="antibodies" value="92 antibodies from 18 providers"/>
</dbReference>
<dbReference type="DNASU" id="321000"/>
<dbReference type="Ensembl" id="ENSMUST00000098750.5">
    <molecule id="Q8CDD9-1"/>
    <property type="protein sequence ID" value="ENSMUSP00000096346.3"/>
    <property type="gene ID" value="ENSMUSG00000056260.16"/>
</dbReference>
<dbReference type="Ensembl" id="ENSMUST00000127003.8">
    <molecule id="Q8CDD9-2"/>
    <property type="protein sequence ID" value="ENSMUSP00000114163.2"/>
    <property type="gene ID" value="ENSMUSG00000056260.16"/>
</dbReference>
<dbReference type="GeneID" id="321000"/>
<dbReference type="KEGG" id="mmu:321000"/>
<dbReference type="UCSC" id="uc008qwi.1">
    <molecule id="Q8CDD9-1"/>
    <property type="organism name" value="mouse"/>
</dbReference>
<dbReference type="AGR" id="MGI:2445214"/>
<dbReference type="CTD" id="55791"/>
<dbReference type="MGI" id="MGI:2445214">
    <property type="gene designation" value="Lrif1"/>
</dbReference>
<dbReference type="VEuPathDB" id="HostDB:ENSMUSG00000056260"/>
<dbReference type="eggNOG" id="ENOG502QU1A">
    <property type="taxonomic scope" value="Eukaryota"/>
</dbReference>
<dbReference type="GeneTree" id="ENSGT00390000017353"/>
<dbReference type="HOGENOM" id="CLU_020634_0_0_1"/>
<dbReference type="InParanoid" id="Q8CDD9"/>
<dbReference type="OMA" id="ERNDKNH"/>
<dbReference type="OrthoDB" id="9944055at2759"/>
<dbReference type="PhylomeDB" id="Q8CDD9"/>
<dbReference type="BioGRID-ORCS" id="321000">
    <property type="hits" value="5 hits in 75 CRISPR screens"/>
</dbReference>
<dbReference type="ChiTaRS" id="Lrif1">
    <property type="organism name" value="mouse"/>
</dbReference>
<dbReference type="PRO" id="PR:Q8CDD9"/>
<dbReference type="Proteomes" id="UP000000589">
    <property type="component" value="Chromosome 3"/>
</dbReference>
<dbReference type="RNAct" id="Q8CDD9">
    <property type="molecule type" value="protein"/>
</dbReference>
<dbReference type="Bgee" id="ENSMUSG00000056260">
    <property type="expression patterns" value="Expressed in spermatid and 229 other cell types or tissues"/>
</dbReference>
<dbReference type="ExpressionAtlas" id="Q8CDD9">
    <property type="expression patterns" value="baseline and differential"/>
</dbReference>
<dbReference type="GO" id="GO:0001740">
    <property type="term" value="C:Barr body"/>
    <property type="evidence" value="ECO:0000314"/>
    <property type="project" value="UniProtKB"/>
</dbReference>
<dbReference type="GO" id="GO:0034451">
    <property type="term" value="C:centriolar satellite"/>
    <property type="evidence" value="ECO:0007669"/>
    <property type="project" value="Ensembl"/>
</dbReference>
<dbReference type="GO" id="GO:0000781">
    <property type="term" value="C:chromosome, telomeric region"/>
    <property type="evidence" value="ECO:0007669"/>
    <property type="project" value="Ensembl"/>
</dbReference>
<dbReference type="GO" id="GO:0016363">
    <property type="term" value="C:nuclear matrix"/>
    <property type="evidence" value="ECO:0007669"/>
    <property type="project" value="UniProtKB-SubCell"/>
</dbReference>
<dbReference type="GO" id="GO:0005654">
    <property type="term" value="C:nucleoplasm"/>
    <property type="evidence" value="ECO:0007669"/>
    <property type="project" value="Ensembl"/>
</dbReference>
<dbReference type="GO" id="GO:0042974">
    <property type="term" value="F:nuclear retinoic acid receptor binding"/>
    <property type="evidence" value="ECO:0007669"/>
    <property type="project" value="InterPro"/>
</dbReference>
<dbReference type="GO" id="GO:0009048">
    <property type="term" value="P:dosage compensation by inactivation of X chromosome"/>
    <property type="evidence" value="ECO:0000250"/>
    <property type="project" value="UniProtKB"/>
</dbReference>
<dbReference type="GO" id="GO:0006355">
    <property type="term" value="P:regulation of DNA-templated transcription"/>
    <property type="evidence" value="ECO:0007669"/>
    <property type="project" value="InterPro"/>
</dbReference>
<dbReference type="InterPro" id="IPR026191">
    <property type="entry name" value="LRIF1"/>
</dbReference>
<dbReference type="PANTHER" id="PTHR16131">
    <property type="entry name" value="LIGAND-DEPENDENT NUCLEAR RECEPTOR-INTERACTING FACTOR 1"/>
    <property type="match status" value="1"/>
</dbReference>
<dbReference type="PANTHER" id="PTHR16131:SF2">
    <property type="entry name" value="LIGAND-DEPENDENT NUCLEAR RECEPTOR-INTERACTING FACTOR 1"/>
    <property type="match status" value="1"/>
</dbReference>
<dbReference type="Pfam" id="PF15741">
    <property type="entry name" value="LRIF1"/>
    <property type="match status" value="1"/>
</dbReference>
<evidence type="ECO:0000250" key="1">
    <source>
        <dbReference type="UniProtKB" id="Q5T3J3"/>
    </source>
</evidence>
<evidence type="ECO:0000255" key="2"/>
<evidence type="ECO:0000256" key="3">
    <source>
        <dbReference type="SAM" id="MobiDB-lite"/>
    </source>
</evidence>
<evidence type="ECO:0000269" key="4">
    <source>
    </source>
</evidence>
<evidence type="ECO:0000303" key="5">
    <source>
    </source>
</evidence>
<evidence type="ECO:0000303" key="6">
    <source>
    </source>
</evidence>
<evidence type="ECO:0000305" key="7"/>
<name>LRIF1_MOUSE</name>
<keyword id="KW-0025">Alternative splicing</keyword>
<keyword id="KW-0158">Chromosome</keyword>
<keyword id="KW-0175">Coiled coil</keyword>
<keyword id="KW-1017">Isopeptide bond</keyword>
<keyword id="KW-0539">Nucleus</keyword>
<keyword id="KW-0597">Phosphoprotein</keyword>
<keyword id="KW-1185">Reference proteome</keyword>
<keyword id="KW-0804">Transcription</keyword>
<keyword id="KW-0805">Transcription regulation</keyword>
<keyword id="KW-0832">Ubl conjugation</keyword>
<protein>
    <recommendedName>
        <fullName>Ligand-dependent nuclear receptor-interacting factor 1</fullName>
    </recommendedName>
</protein>
<organism>
    <name type="scientific">Mus musculus</name>
    <name type="common">Mouse</name>
    <dbReference type="NCBI Taxonomy" id="10090"/>
    <lineage>
        <taxon>Eukaryota</taxon>
        <taxon>Metazoa</taxon>
        <taxon>Chordata</taxon>
        <taxon>Craniata</taxon>
        <taxon>Vertebrata</taxon>
        <taxon>Euteleostomi</taxon>
        <taxon>Mammalia</taxon>
        <taxon>Eutheria</taxon>
        <taxon>Euarchontoglires</taxon>
        <taxon>Glires</taxon>
        <taxon>Rodentia</taxon>
        <taxon>Myomorpha</taxon>
        <taxon>Muroidea</taxon>
        <taxon>Muridae</taxon>
        <taxon>Murinae</taxon>
        <taxon>Mus</taxon>
        <taxon>Mus</taxon>
    </lineage>
</organism>
<gene>
    <name type="primary">Lrif1</name>
</gene>
<comment type="function">
    <text evidence="1">Together with SMCHD1, involved in chromosome X inactivation in females by promoting the compaction of heterochromatin. Also able to repress the ligand-induced transcriptional activity of retinoic acid receptor alpha (RARA), possibly through direct recruitment of histone deacetylases.</text>
</comment>
<comment type="subunit">
    <text evidence="1 4">Interacts with RARA (By similarity). Interacts with SMCHD1; leading to recruitment to inactivated chromosome X in females (PubMed:26391951). Interacts (via PxVxL motif) with HP1 (CBX1/HP1-beta, CBX3/HP1-gamma and CBX5/HP1-alpha) (By similarity).</text>
</comment>
<comment type="subcellular location">
    <subcellularLocation>
        <location evidence="4">Chromosome</location>
    </subcellularLocation>
    <subcellularLocation>
        <location evidence="1">Nucleus matrix</location>
    </subcellularLocation>
    <text evidence="1">Localizes to Barr body; recruited by SMCHD1.</text>
</comment>
<comment type="alternative products">
    <event type="alternative splicing"/>
    <isoform>
        <id>Q8CDD9-1</id>
        <name>1</name>
        <sequence type="displayed"/>
    </isoform>
    <isoform>
        <id>Q8CDD9-2</id>
        <name>2</name>
        <sequence type="described" ref="VSP_020722 VSP_020723"/>
    </isoform>
</comment>
<comment type="domain">
    <text evidence="1">The Pro-Xaa-Val-Xaa-Leu (PxVxL) motif mediates interaction with HP1 (CBX1/HP1-beta, CBX3/HP1-gamma and CBX5/HP1-alpha).</text>
</comment>
<comment type="similarity">
    <text evidence="7">Belongs to the LRIF1 family.</text>
</comment>
<proteinExistence type="evidence at protein level"/>
<accession>Q8CDD9</accession>
<accession>Q149J0</accession>
<accession>Q8C893</accession>